<sequence>MTIAITGGGTGGHLTIAKILAYELKKRGLKTIFIGSTNGQDMLWFENSVLFDEKYFLKSSGVVNKKGISRILSLFKILALSFGCRKIFAKHDVKAVISVGGYSSAPAAFWAVANKIPLFIHEQNAEIGKINALLKRFAKRFYSSYFEPKFDYPIDEIFLKTARIRREVKTVMFLGGSQGANFINELAVKLAPHLAEFGYKIIHQCGEANEAKMREIYKKESINVELIGFSKMLHKFVESADLCISRSGASTLWELAANAVPAVFIPFPYAAGDHQYYNAKFLEQFCKIVRQSDADEERIFSIIQNFDVKAASIGLKKLIKPDGAKKIVDDIIENLKNEDKK</sequence>
<name>MURG_CAMHC</name>
<accession>A7I265</accession>
<protein>
    <recommendedName>
        <fullName evidence="1">UDP-N-acetylglucosamine--N-acetylmuramyl-(pentapeptide) pyrophosphoryl-undecaprenol N-acetylglucosamine transferase</fullName>
        <ecNumber evidence="1">2.4.1.227</ecNumber>
    </recommendedName>
    <alternativeName>
        <fullName evidence="1">Undecaprenyl-PP-MurNAc-pentapeptide-UDPGlcNAc GlcNAc transferase</fullName>
    </alternativeName>
</protein>
<proteinExistence type="inferred from homology"/>
<gene>
    <name evidence="1" type="primary">murG</name>
    <name type="ordered locus">CHAB381_1048</name>
</gene>
<evidence type="ECO:0000255" key="1">
    <source>
        <dbReference type="HAMAP-Rule" id="MF_00033"/>
    </source>
</evidence>
<keyword id="KW-0131">Cell cycle</keyword>
<keyword id="KW-0132">Cell division</keyword>
<keyword id="KW-0997">Cell inner membrane</keyword>
<keyword id="KW-1003">Cell membrane</keyword>
<keyword id="KW-0133">Cell shape</keyword>
<keyword id="KW-0961">Cell wall biogenesis/degradation</keyword>
<keyword id="KW-0328">Glycosyltransferase</keyword>
<keyword id="KW-0472">Membrane</keyword>
<keyword id="KW-0573">Peptidoglycan synthesis</keyword>
<keyword id="KW-1185">Reference proteome</keyword>
<keyword id="KW-0808">Transferase</keyword>
<organism>
    <name type="scientific">Campylobacter hominis (strain ATCC BAA-381 / DSM 21671 / CCUG 45161 / LMG 19568 / NCTC 13146 / CH001A)</name>
    <dbReference type="NCBI Taxonomy" id="360107"/>
    <lineage>
        <taxon>Bacteria</taxon>
        <taxon>Pseudomonadati</taxon>
        <taxon>Campylobacterota</taxon>
        <taxon>Epsilonproteobacteria</taxon>
        <taxon>Campylobacterales</taxon>
        <taxon>Campylobacteraceae</taxon>
        <taxon>Campylobacter</taxon>
    </lineage>
</organism>
<feature type="chain" id="PRO_0000315081" description="UDP-N-acetylglucosamine--N-acetylmuramyl-(pentapeptide) pyrophosphoryl-undecaprenol N-acetylglucosamine transferase">
    <location>
        <begin position="1"/>
        <end position="341"/>
    </location>
</feature>
<feature type="binding site" evidence="1">
    <location>
        <begin position="10"/>
        <end position="12"/>
    </location>
    <ligand>
        <name>UDP-N-acetyl-alpha-D-glucosamine</name>
        <dbReference type="ChEBI" id="CHEBI:57705"/>
    </ligand>
</feature>
<feature type="binding site" evidence="1">
    <location>
        <position position="124"/>
    </location>
    <ligand>
        <name>UDP-N-acetyl-alpha-D-glucosamine</name>
        <dbReference type="ChEBI" id="CHEBI:57705"/>
    </ligand>
</feature>
<feature type="binding site" evidence="1">
    <location>
        <position position="177"/>
    </location>
    <ligand>
        <name>UDP-N-acetyl-alpha-D-glucosamine</name>
        <dbReference type="ChEBI" id="CHEBI:57705"/>
    </ligand>
</feature>
<feature type="binding site" evidence="1">
    <location>
        <position position="275"/>
    </location>
    <ligand>
        <name>UDP-N-acetyl-alpha-D-glucosamine</name>
        <dbReference type="ChEBI" id="CHEBI:57705"/>
    </ligand>
</feature>
<reference key="1">
    <citation type="submission" date="2007-07" db="EMBL/GenBank/DDBJ databases">
        <title>Complete genome sequence of Campylobacter hominis ATCC BAA-381, a commensal isolated from the human gastrointestinal tract.</title>
        <authorList>
            <person name="Fouts D.E."/>
            <person name="Mongodin E.F."/>
            <person name="Puiu D."/>
            <person name="Sebastian Y."/>
            <person name="Miller W.G."/>
            <person name="Mandrell R.E."/>
            <person name="Nelson K.E."/>
        </authorList>
    </citation>
    <scope>NUCLEOTIDE SEQUENCE [LARGE SCALE GENOMIC DNA]</scope>
    <source>
        <strain>ATCC BAA-381 / DSM 21671 / CCUG 45161 / LMG 19568 / NCTC 13146 / CH001A</strain>
    </source>
</reference>
<comment type="function">
    <text evidence="1">Cell wall formation. Catalyzes the transfer of a GlcNAc subunit on undecaprenyl-pyrophosphoryl-MurNAc-pentapeptide (lipid intermediate I) to form undecaprenyl-pyrophosphoryl-MurNAc-(pentapeptide)GlcNAc (lipid intermediate II).</text>
</comment>
<comment type="catalytic activity">
    <reaction evidence="1">
        <text>di-trans,octa-cis-undecaprenyl diphospho-N-acetyl-alpha-D-muramoyl-L-alanyl-D-glutamyl-meso-2,6-diaminopimeloyl-D-alanyl-D-alanine + UDP-N-acetyl-alpha-D-glucosamine = di-trans,octa-cis-undecaprenyl diphospho-[N-acetyl-alpha-D-glucosaminyl-(1-&gt;4)]-N-acetyl-alpha-D-muramoyl-L-alanyl-D-glutamyl-meso-2,6-diaminopimeloyl-D-alanyl-D-alanine + UDP + H(+)</text>
        <dbReference type="Rhea" id="RHEA:31227"/>
        <dbReference type="ChEBI" id="CHEBI:15378"/>
        <dbReference type="ChEBI" id="CHEBI:57705"/>
        <dbReference type="ChEBI" id="CHEBI:58223"/>
        <dbReference type="ChEBI" id="CHEBI:61387"/>
        <dbReference type="ChEBI" id="CHEBI:61388"/>
        <dbReference type="EC" id="2.4.1.227"/>
    </reaction>
</comment>
<comment type="pathway">
    <text evidence="1">Cell wall biogenesis; peptidoglycan biosynthesis.</text>
</comment>
<comment type="subcellular location">
    <subcellularLocation>
        <location evidence="1">Cell inner membrane</location>
        <topology evidence="1">Peripheral membrane protein</topology>
        <orientation evidence="1">Cytoplasmic side</orientation>
    </subcellularLocation>
</comment>
<comment type="similarity">
    <text evidence="1">Belongs to the glycosyltransferase 28 family. MurG subfamily.</text>
</comment>
<dbReference type="EC" id="2.4.1.227" evidence="1"/>
<dbReference type="EMBL" id="CP000776">
    <property type="protein sequence ID" value="ABS50931.1"/>
    <property type="molecule type" value="Genomic_DNA"/>
</dbReference>
<dbReference type="RefSeq" id="WP_012108903.1">
    <property type="nucleotide sequence ID" value="NC_009714.1"/>
</dbReference>
<dbReference type="SMR" id="A7I265"/>
<dbReference type="STRING" id="360107.CHAB381_1048"/>
<dbReference type="CAZy" id="GT28">
    <property type="family name" value="Glycosyltransferase Family 28"/>
</dbReference>
<dbReference type="KEGG" id="cha:CHAB381_1048"/>
<dbReference type="eggNOG" id="COG0707">
    <property type="taxonomic scope" value="Bacteria"/>
</dbReference>
<dbReference type="HOGENOM" id="CLU_037404_2_1_7"/>
<dbReference type="OrthoDB" id="9808936at2"/>
<dbReference type="UniPathway" id="UPA00219"/>
<dbReference type="Proteomes" id="UP000002407">
    <property type="component" value="Chromosome"/>
</dbReference>
<dbReference type="GO" id="GO:0005886">
    <property type="term" value="C:plasma membrane"/>
    <property type="evidence" value="ECO:0007669"/>
    <property type="project" value="UniProtKB-SubCell"/>
</dbReference>
<dbReference type="GO" id="GO:0051991">
    <property type="term" value="F:UDP-N-acetyl-D-glucosamine:N-acetylmuramoyl-L-alanyl-D-glutamyl-meso-2,6-diaminopimelyl-D-alanyl-D-alanine-diphosphoundecaprenol 4-beta-N-acetylglucosaminlytransferase activity"/>
    <property type="evidence" value="ECO:0007669"/>
    <property type="project" value="RHEA"/>
</dbReference>
<dbReference type="GO" id="GO:0050511">
    <property type="term" value="F:undecaprenyldiphospho-muramoylpentapeptide beta-N-acetylglucosaminyltransferase activity"/>
    <property type="evidence" value="ECO:0007669"/>
    <property type="project" value="UniProtKB-UniRule"/>
</dbReference>
<dbReference type="GO" id="GO:0005975">
    <property type="term" value="P:carbohydrate metabolic process"/>
    <property type="evidence" value="ECO:0007669"/>
    <property type="project" value="InterPro"/>
</dbReference>
<dbReference type="GO" id="GO:0051301">
    <property type="term" value="P:cell division"/>
    <property type="evidence" value="ECO:0007669"/>
    <property type="project" value="UniProtKB-KW"/>
</dbReference>
<dbReference type="GO" id="GO:0071555">
    <property type="term" value="P:cell wall organization"/>
    <property type="evidence" value="ECO:0007669"/>
    <property type="project" value="UniProtKB-KW"/>
</dbReference>
<dbReference type="GO" id="GO:0030259">
    <property type="term" value="P:lipid glycosylation"/>
    <property type="evidence" value="ECO:0007669"/>
    <property type="project" value="UniProtKB-UniRule"/>
</dbReference>
<dbReference type="GO" id="GO:0009252">
    <property type="term" value="P:peptidoglycan biosynthetic process"/>
    <property type="evidence" value="ECO:0007669"/>
    <property type="project" value="UniProtKB-UniRule"/>
</dbReference>
<dbReference type="GO" id="GO:0008360">
    <property type="term" value="P:regulation of cell shape"/>
    <property type="evidence" value="ECO:0007669"/>
    <property type="project" value="UniProtKB-KW"/>
</dbReference>
<dbReference type="CDD" id="cd03785">
    <property type="entry name" value="GT28_MurG"/>
    <property type="match status" value="1"/>
</dbReference>
<dbReference type="Gene3D" id="3.40.50.2000">
    <property type="entry name" value="Glycogen Phosphorylase B"/>
    <property type="match status" value="2"/>
</dbReference>
<dbReference type="HAMAP" id="MF_00033">
    <property type="entry name" value="MurG"/>
    <property type="match status" value="1"/>
</dbReference>
<dbReference type="InterPro" id="IPR006009">
    <property type="entry name" value="GlcNAc_MurG"/>
</dbReference>
<dbReference type="InterPro" id="IPR007235">
    <property type="entry name" value="Glyco_trans_28_C"/>
</dbReference>
<dbReference type="InterPro" id="IPR004276">
    <property type="entry name" value="GlycoTrans_28_N"/>
</dbReference>
<dbReference type="PANTHER" id="PTHR21015:SF22">
    <property type="entry name" value="GLYCOSYLTRANSFERASE"/>
    <property type="match status" value="1"/>
</dbReference>
<dbReference type="PANTHER" id="PTHR21015">
    <property type="entry name" value="UDP-N-ACETYLGLUCOSAMINE--N-ACETYLMURAMYL-(PENTAPEPTIDE) PYROPHOSPHORYL-UNDECAPRENOL N-ACETYLGLUCOSAMINE TRANSFERASE 1"/>
    <property type="match status" value="1"/>
</dbReference>
<dbReference type="Pfam" id="PF04101">
    <property type="entry name" value="Glyco_tran_28_C"/>
    <property type="match status" value="1"/>
</dbReference>
<dbReference type="Pfam" id="PF03033">
    <property type="entry name" value="Glyco_transf_28"/>
    <property type="match status" value="1"/>
</dbReference>
<dbReference type="SUPFAM" id="SSF53756">
    <property type="entry name" value="UDP-Glycosyltransferase/glycogen phosphorylase"/>
    <property type="match status" value="1"/>
</dbReference>